<name>RS3_PSEF5</name>
<sequence length="228" mass="25692">MGQKVHPIGIRLGIVKEHTSVWYADGRTYADYLLADLNVREYLQDKLKSASVSRIDIHRPAQTARITIHTARPGIVIGKKGEDVEKLRQDLTKQMGVPVHINIEEIRKPELDGMLVAQSVAQQLERRVMFRRAMKRAVQNAMRIGAKGIKIQVSGRLGGAEIARTEWYREGRVPLHTLRADIDYATYEAHTTYGVIGVKVWIFKGEVIGGRQEELKPQAPAPRKKAAK</sequence>
<accession>Q4K539</accession>
<proteinExistence type="inferred from homology"/>
<keyword id="KW-0687">Ribonucleoprotein</keyword>
<keyword id="KW-0689">Ribosomal protein</keyword>
<keyword id="KW-0694">RNA-binding</keyword>
<keyword id="KW-0699">rRNA-binding</keyword>
<dbReference type="EMBL" id="CP000076">
    <property type="protein sequence ID" value="AAY94781.1"/>
    <property type="molecule type" value="Genomic_DNA"/>
</dbReference>
<dbReference type="RefSeq" id="WP_007924192.1">
    <property type="nucleotide sequence ID" value="NC_004129.6"/>
</dbReference>
<dbReference type="SMR" id="Q4K539"/>
<dbReference type="STRING" id="220664.PFL_5576"/>
<dbReference type="GeneID" id="93406142"/>
<dbReference type="KEGG" id="pfl:PFL_5576"/>
<dbReference type="eggNOG" id="COG0092">
    <property type="taxonomic scope" value="Bacteria"/>
</dbReference>
<dbReference type="HOGENOM" id="CLU_058591_0_2_6"/>
<dbReference type="Proteomes" id="UP000008540">
    <property type="component" value="Chromosome"/>
</dbReference>
<dbReference type="GO" id="GO:0022627">
    <property type="term" value="C:cytosolic small ribosomal subunit"/>
    <property type="evidence" value="ECO:0007669"/>
    <property type="project" value="TreeGrafter"/>
</dbReference>
<dbReference type="GO" id="GO:0003729">
    <property type="term" value="F:mRNA binding"/>
    <property type="evidence" value="ECO:0007669"/>
    <property type="project" value="UniProtKB-UniRule"/>
</dbReference>
<dbReference type="GO" id="GO:0019843">
    <property type="term" value="F:rRNA binding"/>
    <property type="evidence" value="ECO:0007669"/>
    <property type="project" value="UniProtKB-UniRule"/>
</dbReference>
<dbReference type="GO" id="GO:0003735">
    <property type="term" value="F:structural constituent of ribosome"/>
    <property type="evidence" value="ECO:0007669"/>
    <property type="project" value="InterPro"/>
</dbReference>
<dbReference type="GO" id="GO:0006412">
    <property type="term" value="P:translation"/>
    <property type="evidence" value="ECO:0007669"/>
    <property type="project" value="UniProtKB-UniRule"/>
</dbReference>
<dbReference type="CDD" id="cd02412">
    <property type="entry name" value="KH-II_30S_S3"/>
    <property type="match status" value="1"/>
</dbReference>
<dbReference type="FunFam" id="3.30.1140.32:FF:000001">
    <property type="entry name" value="30S ribosomal protein S3"/>
    <property type="match status" value="1"/>
</dbReference>
<dbReference type="FunFam" id="3.30.300.20:FF:000001">
    <property type="entry name" value="30S ribosomal protein S3"/>
    <property type="match status" value="1"/>
</dbReference>
<dbReference type="Gene3D" id="3.30.300.20">
    <property type="match status" value="1"/>
</dbReference>
<dbReference type="Gene3D" id="3.30.1140.32">
    <property type="entry name" value="Ribosomal protein S3, C-terminal domain"/>
    <property type="match status" value="1"/>
</dbReference>
<dbReference type="HAMAP" id="MF_01309_B">
    <property type="entry name" value="Ribosomal_uS3_B"/>
    <property type="match status" value="1"/>
</dbReference>
<dbReference type="InterPro" id="IPR004087">
    <property type="entry name" value="KH_dom"/>
</dbReference>
<dbReference type="InterPro" id="IPR015946">
    <property type="entry name" value="KH_dom-like_a/b"/>
</dbReference>
<dbReference type="InterPro" id="IPR004044">
    <property type="entry name" value="KH_dom_type_2"/>
</dbReference>
<dbReference type="InterPro" id="IPR009019">
    <property type="entry name" value="KH_sf_prok-type"/>
</dbReference>
<dbReference type="InterPro" id="IPR036419">
    <property type="entry name" value="Ribosomal_S3_C_sf"/>
</dbReference>
<dbReference type="InterPro" id="IPR005704">
    <property type="entry name" value="Ribosomal_uS3_bac-typ"/>
</dbReference>
<dbReference type="InterPro" id="IPR001351">
    <property type="entry name" value="Ribosomal_uS3_C"/>
</dbReference>
<dbReference type="InterPro" id="IPR018280">
    <property type="entry name" value="Ribosomal_uS3_CS"/>
</dbReference>
<dbReference type="NCBIfam" id="TIGR01009">
    <property type="entry name" value="rpsC_bact"/>
    <property type="match status" value="1"/>
</dbReference>
<dbReference type="PANTHER" id="PTHR11760">
    <property type="entry name" value="30S/40S RIBOSOMAL PROTEIN S3"/>
    <property type="match status" value="1"/>
</dbReference>
<dbReference type="PANTHER" id="PTHR11760:SF19">
    <property type="entry name" value="SMALL RIBOSOMAL SUBUNIT PROTEIN US3C"/>
    <property type="match status" value="1"/>
</dbReference>
<dbReference type="Pfam" id="PF07650">
    <property type="entry name" value="KH_2"/>
    <property type="match status" value="1"/>
</dbReference>
<dbReference type="Pfam" id="PF00189">
    <property type="entry name" value="Ribosomal_S3_C"/>
    <property type="match status" value="1"/>
</dbReference>
<dbReference type="SMART" id="SM00322">
    <property type="entry name" value="KH"/>
    <property type="match status" value="1"/>
</dbReference>
<dbReference type="SUPFAM" id="SSF54814">
    <property type="entry name" value="Prokaryotic type KH domain (KH-domain type II)"/>
    <property type="match status" value="1"/>
</dbReference>
<dbReference type="SUPFAM" id="SSF54821">
    <property type="entry name" value="Ribosomal protein S3 C-terminal domain"/>
    <property type="match status" value="1"/>
</dbReference>
<dbReference type="PROSITE" id="PS50823">
    <property type="entry name" value="KH_TYPE_2"/>
    <property type="match status" value="1"/>
</dbReference>
<dbReference type="PROSITE" id="PS00548">
    <property type="entry name" value="RIBOSOMAL_S3"/>
    <property type="match status" value="1"/>
</dbReference>
<evidence type="ECO:0000255" key="1">
    <source>
        <dbReference type="HAMAP-Rule" id="MF_01309"/>
    </source>
</evidence>
<evidence type="ECO:0000305" key="2"/>
<gene>
    <name evidence="1" type="primary">rpsC</name>
    <name type="ordered locus">PFL_5576</name>
</gene>
<comment type="function">
    <text evidence="1">Binds the lower part of the 30S subunit head. Binds mRNA in the 70S ribosome, positioning it for translation.</text>
</comment>
<comment type="subunit">
    <text evidence="1">Part of the 30S ribosomal subunit. Forms a tight complex with proteins S10 and S14.</text>
</comment>
<comment type="similarity">
    <text evidence="1">Belongs to the universal ribosomal protein uS3 family.</text>
</comment>
<organism>
    <name type="scientific">Pseudomonas fluorescens (strain ATCC BAA-477 / NRRL B-23932 / Pf-5)</name>
    <dbReference type="NCBI Taxonomy" id="220664"/>
    <lineage>
        <taxon>Bacteria</taxon>
        <taxon>Pseudomonadati</taxon>
        <taxon>Pseudomonadota</taxon>
        <taxon>Gammaproteobacteria</taxon>
        <taxon>Pseudomonadales</taxon>
        <taxon>Pseudomonadaceae</taxon>
        <taxon>Pseudomonas</taxon>
    </lineage>
</organism>
<feature type="chain" id="PRO_0000230716" description="Small ribosomal subunit protein uS3">
    <location>
        <begin position="1"/>
        <end position="228"/>
    </location>
</feature>
<feature type="domain" description="KH type-2" evidence="1">
    <location>
        <begin position="39"/>
        <end position="107"/>
    </location>
</feature>
<reference key="1">
    <citation type="journal article" date="2005" name="Nat. Biotechnol.">
        <title>Complete genome sequence of the plant commensal Pseudomonas fluorescens Pf-5.</title>
        <authorList>
            <person name="Paulsen I.T."/>
            <person name="Press C.M."/>
            <person name="Ravel J."/>
            <person name="Kobayashi D.Y."/>
            <person name="Myers G.S.A."/>
            <person name="Mavrodi D.V."/>
            <person name="DeBoy R.T."/>
            <person name="Seshadri R."/>
            <person name="Ren Q."/>
            <person name="Madupu R."/>
            <person name="Dodson R.J."/>
            <person name="Durkin A.S."/>
            <person name="Brinkac L.M."/>
            <person name="Daugherty S.C."/>
            <person name="Sullivan S.A."/>
            <person name="Rosovitz M.J."/>
            <person name="Gwinn M.L."/>
            <person name="Zhou L."/>
            <person name="Schneider D.J."/>
            <person name="Cartinhour S.W."/>
            <person name="Nelson W.C."/>
            <person name="Weidman J."/>
            <person name="Watkins K."/>
            <person name="Tran K."/>
            <person name="Khouri H."/>
            <person name="Pierson E.A."/>
            <person name="Pierson L.S. III"/>
            <person name="Thomashow L.S."/>
            <person name="Loper J.E."/>
        </authorList>
    </citation>
    <scope>NUCLEOTIDE SEQUENCE [LARGE SCALE GENOMIC DNA]</scope>
    <source>
        <strain>ATCC BAA-477 / NRRL B-23932 / Pf-5</strain>
    </source>
</reference>
<protein>
    <recommendedName>
        <fullName evidence="1">Small ribosomal subunit protein uS3</fullName>
    </recommendedName>
    <alternativeName>
        <fullName evidence="2">30S ribosomal protein S3</fullName>
    </alternativeName>
</protein>